<reference key="1">
    <citation type="journal article" date="2003" name="Nature">
        <title>Genome sequence of Bacillus cereus and comparative analysis with Bacillus anthracis.</title>
        <authorList>
            <person name="Ivanova N."/>
            <person name="Sorokin A."/>
            <person name="Anderson I."/>
            <person name="Galleron N."/>
            <person name="Candelon B."/>
            <person name="Kapatral V."/>
            <person name="Bhattacharyya A."/>
            <person name="Reznik G."/>
            <person name="Mikhailova N."/>
            <person name="Lapidus A."/>
            <person name="Chu L."/>
            <person name="Mazur M."/>
            <person name="Goltsman E."/>
            <person name="Larsen N."/>
            <person name="D'Souza M."/>
            <person name="Walunas T."/>
            <person name="Grechkin Y."/>
            <person name="Pusch G."/>
            <person name="Haselkorn R."/>
            <person name="Fonstein M."/>
            <person name="Ehrlich S.D."/>
            <person name="Overbeek R."/>
            <person name="Kyrpides N.C."/>
        </authorList>
    </citation>
    <scope>NUCLEOTIDE SEQUENCE [LARGE SCALE GENOMIC DNA]</scope>
    <source>
        <strain>ATCC 14579 / DSM 31 / CCUG 7414 / JCM 2152 / NBRC 15305 / NCIMB 9373 / NCTC 2599 / NRRL B-3711</strain>
    </source>
</reference>
<name>GSA2_BACCR</name>
<accession>Q817R3</accession>
<protein>
    <recommendedName>
        <fullName evidence="1">Glutamate-1-semialdehyde 2,1-aminomutase 2</fullName>
        <shortName evidence="1">GSA 2</shortName>
        <ecNumber evidence="1">5.4.3.8</ecNumber>
    </recommendedName>
    <alternativeName>
        <fullName evidence="1">Glutamate-1-semialdehyde aminotransferase 2</fullName>
        <shortName evidence="1">GSA-AT 2</shortName>
    </alternativeName>
</protein>
<dbReference type="EC" id="5.4.3.8" evidence="1"/>
<dbReference type="EMBL" id="AE016877">
    <property type="protein sequence ID" value="AAP11381.1"/>
    <property type="molecule type" value="Genomic_DNA"/>
</dbReference>
<dbReference type="RefSeq" id="NP_834180.1">
    <property type="nucleotide sequence ID" value="NC_004722.1"/>
</dbReference>
<dbReference type="SMR" id="Q817R3"/>
<dbReference type="STRING" id="226900.BC_4468"/>
<dbReference type="MetOSite" id="Q817R3"/>
<dbReference type="KEGG" id="bce:BC4468"/>
<dbReference type="PATRIC" id="fig|226900.8.peg.4621"/>
<dbReference type="HOGENOM" id="CLU_016922_1_5_9"/>
<dbReference type="OrthoDB" id="9807885at2"/>
<dbReference type="UniPathway" id="UPA00251">
    <property type="reaction ID" value="UER00317"/>
</dbReference>
<dbReference type="Proteomes" id="UP000001417">
    <property type="component" value="Chromosome"/>
</dbReference>
<dbReference type="GO" id="GO:0005737">
    <property type="term" value="C:cytoplasm"/>
    <property type="evidence" value="ECO:0007669"/>
    <property type="project" value="UniProtKB-SubCell"/>
</dbReference>
<dbReference type="GO" id="GO:0042286">
    <property type="term" value="F:glutamate-1-semialdehyde 2,1-aminomutase activity"/>
    <property type="evidence" value="ECO:0007669"/>
    <property type="project" value="UniProtKB-UniRule"/>
</dbReference>
<dbReference type="GO" id="GO:0030170">
    <property type="term" value="F:pyridoxal phosphate binding"/>
    <property type="evidence" value="ECO:0007669"/>
    <property type="project" value="InterPro"/>
</dbReference>
<dbReference type="GO" id="GO:0008483">
    <property type="term" value="F:transaminase activity"/>
    <property type="evidence" value="ECO:0007669"/>
    <property type="project" value="InterPro"/>
</dbReference>
<dbReference type="GO" id="GO:0006782">
    <property type="term" value="P:protoporphyrinogen IX biosynthetic process"/>
    <property type="evidence" value="ECO:0007669"/>
    <property type="project" value="UniProtKB-UniRule"/>
</dbReference>
<dbReference type="CDD" id="cd00610">
    <property type="entry name" value="OAT_like"/>
    <property type="match status" value="1"/>
</dbReference>
<dbReference type="FunFam" id="3.40.640.10:FF:000021">
    <property type="entry name" value="Glutamate-1-semialdehyde 2,1-aminomutase"/>
    <property type="match status" value="1"/>
</dbReference>
<dbReference type="Gene3D" id="3.90.1150.10">
    <property type="entry name" value="Aspartate Aminotransferase, domain 1"/>
    <property type="match status" value="1"/>
</dbReference>
<dbReference type="Gene3D" id="3.40.640.10">
    <property type="entry name" value="Type I PLP-dependent aspartate aminotransferase-like (Major domain)"/>
    <property type="match status" value="1"/>
</dbReference>
<dbReference type="HAMAP" id="MF_00375">
    <property type="entry name" value="HemL_aminotrans_3"/>
    <property type="match status" value="1"/>
</dbReference>
<dbReference type="InterPro" id="IPR004639">
    <property type="entry name" value="4pyrrol_synth_GluAld_NH2Trfase"/>
</dbReference>
<dbReference type="InterPro" id="IPR005814">
    <property type="entry name" value="Aminotrans_3"/>
</dbReference>
<dbReference type="InterPro" id="IPR049704">
    <property type="entry name" value="Aminotrans_3_PPA_site"/>
</dbReference>
<dbReference type="InterPro" id="IPR015424">
    <property type="entry name" value="PyrdxlP-dep_Trfase"/>
</dbReference>
<dbReference type="InterPro" id="IPR015421">
    <property type="entry name" value="PyrdxlP-dep_Trfase_major"/>
</dbReference>
<dbReference type="InterPro" id="IPR015422">
    <property type="entry name" value="PyrdxlP-dep_Trfase_small"/>
</dbReference>
<dbReference type="NCBIfam" id="TIGR00713">
    <property type="entry name" value="hemL"/>
    <property type="match status" value="1"/>
</dbReference>
<dbReference type="NCBIfam" id="NF000818">
    <property type="entry name" value="PRK00062.1"/>
    <property type="match status" value="1"/>
</dbReference>
<dbReference type="PANTHER" id="PTHR43713">
    <property type="entry name" value="GLUTAMATE-1-SEMIALDEHYDE 2,1-AMINOMUTASE"/>
    <property type="match status" value="1"/>
</dbReference>
<dbReference type="PANTHER" id="PTHR43713:SF3">
    <property type="entry name" value="GLUTAMATE-1-SEMIALDEHYDE 2,1-AMINOMUTASE 1, CHLOROPLASTIC-RELATED"/>
    <property type="match status" value="1"/>
</dbReference>
<dbReference type="Pfam" id="PF00202">
    <property type="entry name" value="Aminotran_3"/>
    <property type="match status" value="1"/>
</dbReference>
<dbReference type="SUPFAM" id="SSF53383">
    <property type="entry name" value="PLP-dependent transferases"/>
    <property type="match status" value="1"/>
</dbReference>
<dbReference type="PROSITE" id="PS00600">
    <property type="entry name" value="AA_TRANSFER_CLASS_3"/>
    <property type="match status" value="1"/>
</dbReference>
<sequence length="429" mass="46021">MKKFDKSIAAFEEAQDLMPGGVNSPVRAFKSVGMNPLFMERGKGSKVYDIDGNEYIDYVLSWGPLIHGHANDRVVEALKSVAERGTSFGAPTEIENKLAKLVIERVPSIEIVRMVNSGTEATMSALRLARGYTGRNKILKFIGCYHGHGDSLLIKAGSGVATLGLPDSPGVPEGVAKNTITVAYNDLESVKYAFEQFGDDIACVIVEPVAGNMGVVPPQPGFLEGLREVTEQNGALLIFDEVMTGFRVAYNCGQGYYGVTPDLTCLGKVIGGGLPVGAYGGKAEIMRQVAPSGPIYQAGTLSGNPLAMAAGYETLVQLTPESYVEFERKAEMLEAGLRKAAEKHGIPHHINRAGSMIGIFFTDEPVINYDAAKSSNLEFFAAYYREMVEQGVFLPPSQFEGLFLSTAHSDADIEATIAAAEIAMSKLKA</sequence>
<gene>
    <name evidence="1" type="primary">hemL2</name>
    <name type="ordered locus">BC_4468</name>
</gene>
<keyword id="KW-0963">Cytoplasm</keyword>
<keyword id="KW-0413">Isomerase</keyword>
<keyword id="KW-0627">Porphyrin biosynthesis</keyword>
<keyword id="KW-0663">Pyridoxal phosphate</keyword>
<keyword id="KW-1185">Reference proteome</keyword>
<feature type="chain" id="PRO_0000243541" description="Glutamate-1-semialdehyde 2,1-aminomutase 2">
    <location>
        <begin position="1"/>
        <end position="429"/>
    </location>
</feature>
<feature type="modified residue" description="N6-(pyridoxal phosphate)lysine" evidence="1">
    <location>
        <position position="268"/>
    </location>
</feature>
<evidence type="ECO:0000255" key="1">
    <source>
        <dbReference type="HAMAP-Rule" id="MF_00375"/>
    </source>
</evidence>
<comment type="catalytic activity">
    <reaction evidence="1">
        <text>(S)-4-amino-5-oxopentanoate = 5-aminolevulinate</text>
        <dbReference type="Rhea" id="RHEA:14265"/>
        <dbReference type="ChEBI" id="CHEBI:57501"/>
        <dbReference type="ChEBI" id="CHEBI:356416"/>
        <dbReference type="EC" id="5.4.3.8"/>
    </reaction>
</comment>
<comment type="cofactor">
    <cofactor evidence="1">
        <name>pyridoxal 5'-phosphate</name>
        <dbReference type="ChEBI" id="CHEBI:597326"/>
    </cofactor>
</comment>
<comment type="pathway">
    <text evidence="1">Porphyrin-containing compound metabolism; protoporphyrin-IX biosynthesis; 5-aminolevulinate from L-glutamyl-tRNA(Glu): step 2/2.</text>
</comment>
<comment type="subunit">
    <text evidence="1">Homodimer.</text>
</comment>
<comment type="subcellular location">
    <subcellularLocation>
        <location evidence="1">Cytoplasm</location>
    </subcellularLocation>
</comment>
<comment type="similarity">
    <text evidence="1">Belongs to the class-III pyridoxal-phosphate-dependent aminotransferase family. HemL subfamily.</text>
</comment>
<proteinExistence type="inferred from homology"/>
<organism>
    <name type="scientific">Bacillus cereus (strain ATCC 14579 / DSM 31 / CCUG 7414 / JCM 2152 / NBRC 15305 / NCIMB 9373 / NCTC 2599 / NRRL B-3711)</name>
    <dbReference type="NCBI Taxonomy" id="226900"/>
    <lineage>
        <taxon>Bacteria</taxon>
        <taxon>Bacillati</taxon>
        <taxon>Bacillota</taxon>
        <taxon>Bacilli</taxon>
        <taxon>Bacillales</taxon>
        <taxon>Bacillaceae</taxon>
        <taxon>Bacillus</taxon>
        <taxon>Bacillus cereus group</taxon>
    </lineage>
</organism>